<evidence type="ECO:0000255" key="1">
    <source>
        <dbReference type="HAMAP-Rule" id="MF_01018"/>
    </source>
</evidence>
<name>HIS1_PSEPF</name>
<proteinExistence type="inferred from homology"/>
<accession>Q3KHZ3</accession>
<dbReference type="EC" id="2.4.2.17" evidence="1"/>
<dbReference type="EMBL" id="CP000094">
    <property type="protein sequence ID" value="ABA72613.1"/>
    <property type="molecule type" value="Genomic_DNA"/>
</dbReference>
<dbReference type="RefSeq" id="WP_007953554.1">
    <property type="nucleotide sequence ID" value="NC_007492.2"/>
</dbReference>
<dbReference type="SMR" id="Q3KHZ3"/>
<dbReference type="KEGG" id="pfo:Pfl01_0870"/>
<dbReference type="eggNOG" id="COG0040">
    <property type="taxonomic scope" value="Bacteria"/>
</dbReference>
<dbReference type="HOGENOM" id="CLU_038115_2_0_6"/>
<dbReference type="UniPathway" id="UPA00031">
    <property type="reaction ID" value="UER00006"/>
</dbReference>
<dbReference type="Proteomes" id="UP000002704">
    <property type="component" value="Chromosome"/>
</dbReference>
<dbReference type="GO" id="GO:0005737">
    <property type="term" value="C:cytoplasm"/>
    <property type="evidence" value="ECO:0007669"/>
    <property type="project" value="UniProtKB-SubCell"/>
</dbReference>
<dbReference type="GO" id="GO:0005524">
    <property type="term" value="F:ATP binding"/>
    <property type="evidence" value="ECO:0007669"/>
    <property type="project" value="UniProtKB-KW"/>
</dbReference>
<dbReference type="GO" id="GO:0003879">
    <property type="term" value="F:ATP phosphoribosyltransferase activity"/>
    <property type="evidence" value="ECO:0007669"/>
    <property type="project" value="UniProtKB-UniRule"/>
</dbReference>
<dbReference type="GO" id="GO:0000105">
    <property type="term" value="P:L-histidine biosynthetic process"/>
    <property type="evidence" value="ECO:0007669"/>
    <property type="project" value="UniProtKB-UniRule"/>
</dbReference>
<dbReference type="CDD" id="cd13595">
    <property type="entry name" value="PBP2_HisGs"/>
    <property type="match status" value="1"/>
</dbReference>
<dbReference type="FunFam" id="3.40.190.10:FF:000011">
    <property type="entry name" value="ATP phosphoribosyltransferase"/>
    <property type="match status" value="1"/>
</dbReference>
<dbReference type="FunFam" id="3.40.190.10:FF:000022">
    <property type="entry name" value="ATP phosphoribosyltransferase"/>
    <property type="match status" value="1"/>
</dbReference>
<dbReference type="Gene3D" id="3.40.190.10">
    <property type="entry name" value="Periplasmic binding protein-like II"/>
    <property type="match status" value="2"/>
</dbReference>
<dbReference type="HAMAP" id="MF_01018">
    <property type="entry name" value="HisG_Short"/>
    <property type="match status" value="1"/>
</dbReference>
<dbReference type="InterPro" id="IPR013820">
    <property type="entry name" value="ATP_PRibTrfase_cat"/>
</dbReference>
<dbReference type="InterPro" id="IPR018198">
    <property type="entry name" value="ATP_PRibTrfase_CS"/>
</dbReference>
<dbReference type="InterPro" id="IPR001348">
    <property type="entry name" value="ATP_PRibTrfase_HisG"/>
</dbReference>
<dbReference type="InterPro" id="IPR024893">
    <property type="entry name" value="ATP_PRibTrfase_HisG_short"/>
</dbReference>
<dbReference type="NCBIfam" id="TIGR00070">
    <property type="entry name" value="hisG"/>
    <property type="match status" value="1"/>
</dbReference>
<dbReference type="PANTHER" id="PTHR21403:SF8">
    <property type="entry name" value="ATP PHOSPHORIBOSYLTRANSFERASE"/>
    <property type="match status" value="1"/>
</dbReference>
<dbReference type="PANTHER" id="PTHR21403">
    <property type="entry name" value="ATP PHOSPHORIBOSYLTRANSFERASE ATP-PRTASE"/>
    <property type="match status" value="1"/>
</dbReference>
<dbReference type="Pfam" id="PF01634">
    <property type="entry name" value="HisG"/>
    <property type="match status" value="1"/>
</dbReference>
<dbReference type="SUPFAM" id="SSF53850">
    <property type="entry name" value="Periplasmic binding protein-like II"/>
    <property type="match status" value="1"/>
</dbReference>
<dbReference type="PROSITE" id="PS01316">
    <property type="entry name" value="ATP_P_PHORIBOSYLTR"/>
    <property type="match status" value="1"/>
</dbReference>
<gene>
    <name evidence="1" type="primary">hisG</name>
    <name type="ordered locus">Pfl01_0870</name>
</gene>
<reference key="1">
    <citation type="journal article" date="2009" name="Genome Biol.">
        <title>Genomic and genetic analyses of diversity and plant interactions of Pseudomonas fluorescens.</title>
        <authorList>
            <person name="Silby M.W."/>
            <person name="Cerdeno-Tarraga A.M."/>
            <person name="Vernikos G.S."/>
            <person name="Giddens S.R."/>
            <person name="Jackson R.W."/>
            <person name="Preston G.M."/>
            <person name="Zhang X.-X."/>
            <person name="Moon C.D."/>
            <person name="Gehrig S.M."/>
            <person name="Godfrey S.A.C."/>
            <person name="Knight C.G."/>
            <person name="Malone J.G."/>
            <person name="Robinson Z."/>
            <person name="Spiers A.J."/>
            <person name="Harris S."/>
            <person name="Challis G.L."/>
            <person name="Yaxley A.M."/>
            <person name="Harris D."/>
            <person name="Seeger K."/>
            <person name="Murphy L."/>
            <person name="Rutter S."/>
            <person name="Squares R."/>
            <person name="Quail M.A."/>
            <person name="Saunders E."/>
            <person name="Mavromatis K."/>
            <person name="Brettin T.S."/>
            <person name="Bentley S.D."/>
            <person name="Hothersall J."/>
            <person name="Stephens E."/>
            <person name="Thomas C.M."/>
            <person name="Parkhill J."/>
            <person name="Levy S.B."/>
            <person name="Rainey P.B."/>
            <person name="Thomson N.R."/>
        </authorList>
    </citation>
    <scope>NUCLEOTIDE SEQUENCE [LARGE SCALE GENOMIC DNA]</scope>
    <source>
        <strain>Pf0-1</strain>
    </source>
</reference>
<sequence length="211" mass="23038">MLTIALSKGRILDDTLPLLAEAGIVPTENPDKSRKLIIPTTQEDVRLLIVRATDVPTYVEHGAADLGVAGKDVLMEYTGQGLYEPLDLQIAQCKLMTAGKVGAVEPKGRLRVATKFVNVAKRYYAEQGRQVDIIKLYGSMELAPLIGLADKIIDVVDTGNTLRANGLEPQELIATISSRLVVNKASMKMQHARIQALIDTLRKAVESRHRG</sequence>
<keyword id="KW-0028">Amino-acid biosynthesis</keyword>
<keyword id="KW-0067">ATP-binding</keyword>
<keyword id="KW-0963">Cytoplasm</keyword>
<keyword id="KW-0328">Glycosyltransferase</keyword>
<keyword id="KW-0368">Histidine biosynthesis</keyword>
<keyword id="KW-0547">Nucleotide-binding</keyword>
<keyword id="KW-0808">Transferase</keyword>
<protein>
    <recommendedName>
        <fullName evidence="1">ATP phosphoribosyltransferase</fullName>
        <shortName evidence="1">ATP-PRT</shortName>
        <shortName evidence="1">ATP-PRTase</shortName>
        <ecNumber evidence="1">2.4.2.17</ecNumber>
    </recommendedName>
</protein>
<feature type="chain" id="PRO_0000229327" description="ATP phosphoribosyltransferase">
    <location>
        <begin position="1"/>
        <end position="211"/>
    </location>
</feature>
<comment type="function">
    <text evidence="1">Catalyzes the condensation of ATP and 5-phosphoribose 1-diphosphate to form N'-(5'-phosphoribosyl)-ATP (PR-ATP). Has a crucial role in the pathway because the rate of histidine biosynthesis seems to be controlled primarily by regulation of HisG enzymatic activity.</text>
</comment>
<comment type="catalytic activity">
    <reaction evidence="1">
        <text>1-(5-phospho-beta-D-ribosyl)-ATP + diphosphate = 5-phospho-alpha-D-ribose 1-diphosphate + ATP</text>
        <dbReference type="Rhea" id="RHEA:18473"/>
        <dbReference type="ChEBI" id="CHEBI:30616"/>
        <dbReference type="ChEBI" id="CHEBI:33019"/>
        <dbReference type="ChEBI" id="CHEBI:58017"/>
        <dbReference type="ChEBI" id="CHEBI:73183"/>
        <dbReference type="EC" id="2.4.2.17"/>
    </reaction>
</comment>
<comment type="pathway">
    <text evidence="1">Amino-acid biosynthesis; L-histidine biosynthesis; L-histidine from 5-phospho-alpha-D-ribose 1-diphosphate: step 1/9.</text>
</comment>
<comment type="subunit">
    <text evidence="1">Heteromultimer composed of HisG and HisZ subunits.</text>
</comment>
<comment type="subcellular location">
    <subcellularLocation>
        <location evidence="1">Cytoplasm</location>
    </subcellularLocation>
</comment>
<comment type="domain">
    <text>Lacks the C-terminal regulatory region which is replaced by HisZ.</text>
</comment>
<comment type="similarity">
    <text evidence="1">Belongs to the ATP phosphoribosyltransferase family. Short subfamily.</text>
</comment>
<organism>
    <name type="scientific">Pseudomonas fluorescens (strain Pf0-1)</name>
    <dbReference type="NCBI Taxonomy" id="205922"/>
    <lineage>
        <taxon>Bacteria</taxon>
        <taxon>Pseudomonadati</taxon>
        <taxon>Pseudomonadota</taxon>
        <taxon>Gammaproteobacteria</taxon>
        <taxon>Pseudomonadales</taxon>
        <taxon>Pseudomonadaceae</taxon>
        <taxon>Pseudomonas</taxon>
    </lineage>
</organism>